<feature type="chain" id="PRO_1000206192" description="Aspartate 1-decarboxylase beta chain" evidence="1">
    <location>
        <begin position="1"/>
        <end position="24"/>
    </location>
</feature>
<feature type="chain" id="PRO_1000206193" description="Aspartate 1-decarboxylase alpha chain" evidence="1">
    <location>
        <begin position="25"/>
        <end position="148"/>
    </location>
</feature>
<feature type="active site" description="Schiff-base intermediate with substrate; via pyruvic acid" evidence="1">
    <location>
        <position position="25"/>
    </location>
</feature>
<feature type="active site" description="Proton donor" evidence="1">
    <location>
        <position position="58"/>
    </location>
</feature>
<feature type="binding site" evidence="1">
    <location>
        <position position="57"/>
    </location>
    <ligand>
        <name>substrate</name>
    </ligand>
</feature>
<feature type="binding site" evidence="1">
    <location>
        <begin position="73"/>
        <end position="75"/>
    </location>
    <ligand>
        <name>substrate</name>
    </ligand>
</feature>
<feature type="modified residue" description="Pyruvic acid (Ser)" evidence="1">
    <location>
        <position position="25"/>
    </location>
</feature>
<protein>
    <recommendedName>
        <fullName evidence="1">Aspartate 1-decarboxylase</fullName>
        <ecNumber evidence="1">4.1.1.11</ecNumber>
    </recommendedName>
    <alternativeName>
        <fullName evidence="1">Aspartate alpha-decarboxylase</fullName>
    </alternativeName>
    <component>
        <recommendedName>
            <fullName evidence="1">Aspartate 1-decarboxylase beta chain</fullName>
        </recommendedName>
    </component>
    <component>
        <recommendedName>
            <fullName evidence="1">Aspartate 1-decarboxylase alpha chain</fullName>
        </recommendedName>
    </component>
</protein>
<organism>
    <name type="scientific">Rhodococcus erythropolis (strain PR4 / NBRC 100887)</name>
    <dbReference type="NCBI Taxonomy" id="234621"/>
    <lineage>
        <taxon>Bacteria</taxon>
        <taxon>Bacillati</taxon>
        <taxon>Actinomycetota</taxon>
        <taxon>Actinomycetes</taxon>
        <taxon>Mycobacteriales</taxon>
        <taxon>Nocardiaceae</taxon>
        <taxon>Rhodococcus</taxon>
        <taxon>Rhodococcus erythropolis group</taxon>
    </lineage>
</organism>
<proteinExistence type="inferred from homology"/>
<keyword id="KW-0068">Autocatalytic cleavage</keyword>
<keyword id="KW-0963">Cytoplasm</keyword>
<keyword id="KW-0210">Decarboxylase</keyword>
<keyword id="KW-0456">Lyase</keyword>
<keyword id="KW-0566">Pantothenate biosynthesis</keyword>
<keyword id="KW-0670">Pyruvate</keyword>
<keyword id="KW-0704">Schiff base</keyword>
<keyword id="KW-0865">Zymogen</keyword>
<evidence type="ECO:0000255" key="1">
    <source>
        <dbReference type="HAMAP-Rule" id="MF_00446"/>
    </source>
</evidence>
<name>PAND_RHOE4</name>
<comment type="function">
    <text evidence="1">Catalyzes the pyruvoyl-dependent decarboxylation of aspartate to produce beta-alanine.</text>
</comment>
<comment type="catalytic activity">
    <reaction evidence="1">
        <text>L-aspartate + H(+) = beta-alanine + CO2</text>
        <dbReference type="Rhea" id="RHEA:19497"/>
        <dbReference type="ChEBI" id="CHEBI:15378"/>
        <dbReference type="ChEBI" id="CHEBI:16526"/>
        <dbReference type="ChEBI" id="CHEBI:29991"/>
        <dbReference type="ChEBI" id="CHEBI:57966"/>
        <dbReference type="EC" id="4.1.1.11"/>
    </reaction>
</comment>
<comment type="cofactor">
    <cofactor evidence="1">
        <name>pyruvate</name>
        <dbReference type="ChEBI" id="CHEBI:15361"/>
    </cofactor>
    <text evidence="1">Binds 1 pyruvoyl group covalently per subunit.</text>
</comment>
<comment type="pathway">
    <text evidence="1">Cofactor biosynthesis; (R)-pantothenate biosynthesis; beta-alanine from L-aspartate: step 1/1.</text>
</comment>
<comment type="subunit">
    <text evidence="1">Heterooctamer of four alpha and four beta subunits.</text>
</comment>
<comment type="subcellular location">
    <subcellularLocation>
        <location evidence="1">Cytoplasm</location>
    </subcellularLocation>
</comment>
<comment type="PTM">
    <text evidence="1">Is synthesized initially as an inactive proenzyme, which is activated by self-cleavage at a specific serine bond to produce a beta-subunit with a hydroxyl group at its C-terminus and an alpha-subunit with a pyruvoyl group at its N-terminus.</text>
</comment>
<comment type="similarity">
    <text evidence="1">Belongs to the PanD family.</text>
</comment>
<accession>C0ZPL4</accession>
<sequence>MFRTMMKSKIHRATVTHADLHYVGSVTVDQDLMDAADLLEGEQVCIVDIDNGARLETYVIAGERGTGVIGINGAAAHLVKPGDLVILIAYGVMNEQEVKEYSPRVVFVDADNKQIELGSDPAHAPEGSGLITPRMLSTLEASRESSLV</sequence>
<gene>
    <name evidence="1" type="primary">panD</name>
    <name type="ordered locus">RER_06340</name>
</gene>
<dbReference type="EC" id="4.1.1.11" evidence="1"/>
<dbReference type="EMBL" id="AP008957">
    <property type="protein sequence ID" value="BAH31342.1"/>
    <property type="molecule type" value="Genomic_DNA"/>
</dbReference>
<dbReference type="RefSeq" id="WP_003945761.1">
    <property type="nucleotide sequence ID" value="NC_012490.1"/>
</dbReference>
<dbReference type="SMR" id="C0ZPL4"/>
<dbReference type="GeneID" id="93805525"/>
<dbReference type="KEGG" id="rer:RER_06340"/>
<dbReference type="eggNOG" id="COG0853">
    <property type="taxonomic scope" value="Bacteria"/>
</dbReference>
<dbReference type="HOGENOM" id="CLU_115305_2_0_11"/>
<dbReference type="UniPathway" id="UPA00028">
    <property type="reaction ID" value="UER00002"/>
</dbReference>
<dbReference type="Proteomes" id="UP000002204">
    <property type="component" value="Chromosome"/>
</dbReference>
<dbReference type="GO" id="GO:0005829">
    <property type="term" value="C:cytosol"/>
    <property type="evidence" value="ECO:0007669"/>
    <property type="project" value="TreeGrafter"/>
</dbReference>
<dbReference type="GO" id="GO:0004068">
    <property type="term" value="F:aspartate 1-decarboxylase activity"/>
    <property type="evidence" value="ECO:0007669"/>
    <property type="project" value="UniProtKB-UniRule"/>
</dbReference>
<dbReference type="GO" id="GO:0006523">
    <property type="term" value="P:alanine biosynthetic process"/>
    <property type="evidence" value="ECO:0007669"/>
    <property type="project" value="InterPro"/>
</dbReference>
<dbReference type="GO" id="GO:0015940">
    <property type="term" value="P:pantothenate biosynthetic process"/>
    <property type="evidence" value="ECO:0007669"/>
    <property type="project" value="UniProtKB-UniRule"/>
</dbReference>
<dbReference type="CDD" id="cd06919">
    <property type="entry name" value="Asp_decarbox"/>
    <property type="match status" value="1"/>
</dbReference>
<dbReference type="Gene3D" id="2.40.40.20">
    <property type="match status" value="1"/>
</dbReference>
<dbReference type="HAMAP" id="MF_00446">
    <property type="entry name" value="PanD"/>
    <property type="match status" value="1"/>
</dbReference>
<dbReference type="InterPro" id="IPR009010">
    <property type="entry name" value="Asp_de-COase-like_dom_sf"/>
</dbReference>
<dbReference type="InterPro" id="IPR003190">
    <property type="entry name" value="Asp_decarbox"/>
</dbReference>
<dbReference type="NCBIfam" id="TIGR00223">
    <property type="entry name" value="panD"/>
    <property type="match status" value="1"/>
</dbReference>
<dbReference type="PANTHER" id="PTHR21012">
    <property type="entry name" value="ASPARTATE 1-DECARBOXYLASE"/>
    <property type="match status" value="1"/>
</dbReference>
<dbReference type="PANTHER" id="PTHR21012:SF0">
    <property type="entry name" value="ASPARTATE 1-DECARBOXYLASE"/>
    <property type="match status" value="1"/>
</dbReference>
<dbReference type="Pfam" id="PF02261">
    <property type="entry name" value="Asp_decarbox"/>
    <property type="match status" value="1"/>
</dbReference>
<dbReference type="PIRSF" id="PIRSF006246">
    <property type="entry name" value="Asp_decarbox"/>
    <property type="match status" value="1"/>
</dbReference>
<dbReference type="SUPFAM" id="SSF50692">
    <property type="entry name" value="ADC-like"/>
    <property type="match status" value="1"/>
</dbReference>
<reference key="1">
    <citation type="submission" date="2005-03" db="EMBL/GenBank/DDBJ databases">
        <title>Comparison of the complete genome sequences of Rhodococcus erythropolis PR4 and Rhodococcus opacus B4.</title>
        <authorList>
            <person name="Takarada H."/>
            <person name="Sekine M."/>
            <person name="Hosoyama A."/>
            <person name="Yamada R."/>
            <person name="Fujisawa T."/>
            <person name="Omata S."/>
            <person name="Shimizu A."/>
            <person name="Tsukatani N."/>
            <person name="Tanikawa S."/>
            <person name="Fujita N."/>
            <person name="Harayama S."/>
        </authorList>
    </citation>
    <scope>NUCLEOTIDE SEQUENCE [LARGE SCALE GENOMIC DNA]</scope>
    <source>
        <strain>PR4 / NBRC 100887</strain>
    </source>
</reference>